<reference key="1">
    <citation type="journal article" date="2009" name="Stand. Genomic Sci.">
        <title>Complete genome sequence of Methanocorpusculum labreanum type strain Z.</title>
        <authorList>
            <person name="Anderson I.J."/>
            <person name="Sieprawska-Lupa M."/>
            <person name="Goltsman E."/>
            <person name="Lapidus A."/>
            <person name="Copeland A."/>
            <person name="Glavina Del Rio T."/>
            <person name="Tice H."/>
            <person name="Dalin E."/>
            <person name="Barry K."/>
            <person name="Pitluck S."/>
            <person name="Hauser L."/>
            <person name="Land M."/>
            <person name="Lucas S."/>
            <person name="Richardson P."/>
            <person name="Whitman W.B."/>
            <person name="Kyrpides N.C."/>
        </authorList>
    </citation>
    <scope>NUCLEOTIDE SEQUENCE [LARGE SCALE GENOMIC DNA]</scope>
    <source>
        <strain>ATCC 43576 / DSM 4855 / Z</strain>
    </source>
</reference>
<comment type="function">
    <text evidence="1">Catalyzes the conversion of D-ribulose 5-phosphate to formate and 3,4-dihydroxy-2-butanone 4-phosphate.</text>
</comment>
<comment type="catalytic activity">
    <reaction evidence="1">
        <text>D-ribulose 5-phosphate = (2S)-2-hydroxy-3-oxobutyl phosphate + formate + H(+)</text>
        <dbReference type="Rhea" id="RHEA:18457"/>
        <dbReference type="ChEBI" id="CHEBI:15378"/>
        <dbReference type="ChEBI" id="CHEBI:15740"/>
        <dbReference type="ChEBI" id="CHEBI:58121"/>
        <dbReference type="ChEBI" id="CHEBI:58830"/>
        <dbReference type="EC" id="4.1.99.12"/>
    </reaction>
</comment>
<comment type="cofactor">
    <cofactor evidence="1">
        <name>Mg(2+)</name>
        <dbReference type="ChEBI" id="CHEBI:18420"/>
    </cofactor>
    <cofactor evidence="1">
        <name>Mn(2+)</name>
        <dbReference type="ChEBI" id="CHEBI:29035"/>
    </cofactor>
    <text evidence="1">Binds 2 divalent metal cations per subunit. Magnesium or manganese.</text>
</comment>
<comment type="pathway">
    <text evidence="1">Cofactor biosynthesis; riboflavin biosynthesis; 2-hydroxy-3-oxobutyl phosphate from D-ribulose 5-phosphate: step 1/1.</text>
</comment>
<comment type="subunit">
    <text evidence="1">Homodimer.</text>
</comment>
<comment type="similarity">
    <text evidence="1">Belongs to the DHBP synthase family.</text>
</comment>
<accession>A2SQG6</accession>
<dbReference type="EC" id="4.1.99.12" evidence="1"/>
<dbReference type="EMBL" id="CP000559">
    <property type="protein sequence ID" value="ABN06572.1"/>
    <property type="molecule type" value="Genomic_DNA"/>
</dbReference>
<dbReference type="RefSeq" id="WP_011832773.1">
    <property type="nucleotide sequence ID" value="NC_008942.1"/>
</dbReference>
<dbReference type="SMR" id="A2SQG6"/>
<dbReference type="STRING" id="410358.Mlab_0396"/>
<dbReference type="GeneID" id="4794681"/>
<dbReference type="KEGG" id="mla:Mlab_0396"/>
<dbReference type="eggNOG" id="arCOG01320">
    <property type="taxonomic scope" value="Archaea"/>
</dbReference>
<dbReference type="HOGENOM" id="CLU_020273_3_1_2"/>
<dbReference type="OrthoDB" id="25735at2157"/>
<dbReference type="UniPathway" id="UPA00275">
    <property type="reaction ID" value="UER00399"/>
</dbReference>
<dbReference type="Proteomes" id="UP000000365">
    <property type="component" value="Chromosome"/>
</dbReference>
<dbReference type="GO" id="GO:0005829">
    <property type="term" value="C:cytosol"/>
    <property type="evidence" value="ECO:0007669"/>
    <property type="project" value="TreeGrafter"/>
</dbReference>
<dbReference type="GO" id="GO:0008686">
    <property type="term" value="F:3,4-dihydroxy-2-butanone-4-phosphate synthase activity"/>
    <property type="evidence" value="ECO:0007669"/>
    <property type="project" value="UniProtKB-UniRule"/>
</dbReference>
<dbReference type="GO" id="GO:0003935">
    <property type="term" value="F:GTP cyclohydrolase II activity"/>
    <property type="evidence" value="ECO:0007669"/>
    <property type="project" value="TreeGrafter"/>
</dbReference>
<dbReference type="GO" id="GO:0000287">
    <property type="term" value="F:magnesium ion binding"/>
    <property type="evidence" value="ECO:0007669"/>
    <property type="project" value="UniProtKB-UniRule"/>
</dbReference>
<dbReference type="GO" id="GO:0030145">
    <property type="term" value="F:manganese ion binding"/>
    <property type="evidence" value="ECO:0007669"/>
    <property type="project" value="UniProtKB-UniRule"/>
</dbReference>
<dbReference type="GO" id="GO:0009231">
    <property type="term" value="P:riboflavin biosynthetic process"/>
    <property type="evidence" value="ECO:0007669"/>
    <property type="project" value="UniProtKB-UniRule"/>
</dbReference>
<dbReference type="FunFam" id="3.90.870.10:FF:000001">
    <property type="entry name" value="Riboflavin biosynthesis protein RibBA"/>
    <property type="match status" value="1"/>
</dbReference>
<dbReference type="Gene3D" id="3.90.870.10">
    <property type="entry name" value="DHBP synthase"/>
    <property type="match status" value="1"/>
</dbReference>
<dbReference type="HAMAP" id="MF_00180">
    <property type="entry name" value="RibB"/>
    <property type="match status" value="1"/>
</dbReference>
<dbReference type="InterPro" id="IPR017945">
    <property type="entry name" value="DHBP_synth_RibB-like_a/b_dom"/>
</dbReference>
<dbReference type="InterPro" id="IPR000422">
    <property type="entry name" value="DHBP_synthase_RibB"/>
</dbReference>
<dbReference type="NCBIfam" id="TIGR00506">
    <property type="entry name" value="ribB"/>
    <property type="match status" value="1"/>
</dbReference>
<dbReference type="PANTHER" id="PTHR21327:SF18">
    <property type="entry name" value="3,4-DIHYDROXY-2-BUTANONE 4-PHOSPHATE SYNTHASE"/>
    <property type="match status" value="1"/>
</dbReference>
<dbReference type="PANTHER" id="PTHR21327">
    <property type="entry name" value="GTP CYCLOHYDROLASE II-RELATED"/>
    <property type="match status" value="1"/>
</dbReference>
<dbReference type="Pfam" id="PF00926">
    <property type="entry name" value="DHBP_synthase"/>
    <property type="match status" value="1"/>
</dbReference>
<dbReference type="SUPFAM" id="SSF55821">
    <property type="entry name" value="YrdC/RibB"/>
    <property type="match status" value="1"/>
</dbReference>
<evidence type="ECO:0000255" key="1">
    <source>
        <dbReference type="HAMAP-Rule" id="MF_00180"/>
    </source>
</evidence>
<sequence length="219" mass="24522">MFTFNTIEEALKSLQNGEMIIVTDDENRENEGDLICAAEYATTENVNFMAKYGRGLICMPMGRSLVEKLCLPPMVLKNTDNHETAFTVSIDHVDTTTGISAVERGITARKCIDPNARPEDFRRPGHMFPLQAKDNGVFEREGHTEATVDLMKLAGLREAGLCCEIMADNGEMMRTPELISMAKQYNLTFVTIKDLQAYRRKQEASALAVEQKNMSPMDC</sequence>
<protein>
    <recommendedName>
        <fullName evidence="1">3,4-dihydroxy-2-butanone 4-phosphate synthase</fullName>
        <shortName evidence="1">DHBP synthase</shortName>
        <ecNumber evidence="1">4.1.99.12</ecNumber>
    </recommendedName>
</protein>
<gene>
    <name evidence="1" type="primary">ribB</name>
    <name type="ordered locus">Mlab_0396</name>
</gene>
<feature type="chain" id="PRO_1000040616" description="3,4-dihydroxy-2-butanone 4-phosphate synthase">
    <location>
        <begin position="1"/>
        <end position="219"/>
    </location>
</feature>
<feature type="binding site" evidence="1">
    <location>
        <begin position="28"/>
        <end position="29"/>
    </location>
    <ligand>
        <name>D-ribulose 5-phosphate</name>
        <dbReference type="ChEBI" id="CHEBI:58121"/>
    </ligand>
</feature>
<feature type="binding site" evidence="1">
    <location>
        <position position="29"/>
    </location>
    <ligand>
        <name>Mg(2+)</name>
        <dbReference type="ChEBI" id="CHEBI:18420"/>
        <label>1</label>
    </ligand>
</feature>
<feature type="binding site" evidence="1">
    <location>
        <position position="29"/>
    </location>
    <ligand>
        <name>Mg(2+)</name>
        <dbReference type="ChEBI" id="CHEBI:18420"/>
        <label>2</label>
    </ligand>
</feature>
<feature type="binding site" evidence="1">
    <location>
        <position position="33"/>
    </location>
    <ligand>
        <name>D-ribulose 5-phosphate</name>
        <dbReference type="ChEBI" id="CHEBI:58121"/>
    </ligand>
</feature>
<feature type="binding site" evidence="1">
    <location>
        <begin position="140"/>
        <end position="144"/>
    </location>
    <ligand>
        <name>D-ribulose 5-phosphate</name>
        <dbReference type="ChEBI" id="CHEBI:58121"/>
    </ligand>
</feature>
<feature type="binding site" evidence="1">
    <location>
        <position position="143"/>
    </location>
    <ligand>
        <name>Mg(2+)</name>
        <dbReference type="ChEBI" id="CHEBI:18420"/>
        <label>2</label>
    </ligand>
</feature>
<feature type="binding site" evidence="1">
    <location>
        <position position="164"/>
    </location>
    <ligand>
        <name>D-ribulose 5-phosphate</name>
        <dbReference type="ChEBI" id="CHEBI:58121"/>
    </ligand>
</feature>
<feature type="site" description="Essential for catalytic activity" evidence="1">
    <location>
        <position position="126"/>
    </location>
</feature>
<feature type="site" description="Essential for catalytic activity" evidence="1">
    <location>
        <position position="164"/>
    </location>
</feature>
<keyword id="KW-0456">Lyase</keyword>
<keyword id="KW-0460">Magnesium</keyword>
<keyword id="KW-0464">Manganese</keyword>
<keyword id="KW-0479">Metal-binding</keyword>
<keyword id="KW-1185">Reference proteome</keyword>
<keyword id="KW-0686">Riboflavin biosynthesis</keyword>
<proteinExistence type="inferred from homology"/>
<name>RIBB_METLZ</name>
<organism>
    <name type="scientific">Methanocorpusculum labreanum (strain ATCC 43576 / DSM 4855 / Z)</name>
    <dbReference type="NCBI Taxonomy" id="410358"/>
    <lineage>
        <taxon>Archaea</taxon>
        <taxon>Methanobacteriati</taxon>
        <taxon>Methanobacteriota</taxon>
        <taxon>Stenosarchaea group</taxon>
        <taxon>Methanomicrobia</taxon>
        <taxon>Methanomicrobiales</taxon>
        <taxon>Methanocorpusculaceae</taxon>
        <taxon>Methanocorpusculum</taxon>
    </lineage>
</organism>